<reference key="1">
    <citation type="journal article" date="2005" name="Nucleic Acids Res.">
        <title>Genome dynamics and diversity of Shigella species, the etiologic agents of bacillary dysentery.</title>
        <authorList>
            <person name="Yang F."/>
            <person name="Yang J."/>
            <person name="Zhang X."/>
            <person name="Chen L."/>
            <person name="Jiang Y."/>
            <person name="Yan Y."/>
            <person name="Tang X."/>
            <person name="Wang J."/>
            <person name="Xiong Z."/>
            <person name="Dong J."/>
            <person name="Xue Y."/>
            <person name="Zhu Y."/>
            <person name="Xu X."/>
            <person name="Sun L."/>
            <person name="Chen S."/>
            <person name="Nie H."/>
            <person name="Peng J."/>
            <person name="Xu J."/>
            <person name="Wang Y."/>
            <person name="Yuan Z."/>
            <person name="Wen Y."/>
            <person name="Yao Z."/>
            <person name="Shen Y."/>
            <person name="Qiang B."/>
            <person name="Hou Y."/>
            <person name="Yu J."/>
            <person name="Jin Q."/>
        </authorList>
    </citation>
    <scope>NUCLEOTIDE SEQUENCE [LARGE SCALE GENOMIC DNA]</scope>
    <source>
        <strain>Ss046</strain>
    </source>
</reference>
<proteinExistence type="inferred from homology"/>
<gene>
    <name evidence="1" type="primary">fliE</name>
    <name type="ordered locus">SSON_1995</name>
</gene>
<dbReference type="EMBL" id="CP000038">
    <property type="protein sequence ID" value="AAZ88661.1"/>
    <property type="molecule type" value="Genomic_DNA"/>
</dbReference>
<dbReference type="RefSeq" id="WP_001274299.1">
    <property type="nucleotide sequence ID" value="NC_007384.1"/>
</dbReference>
<dbReference type="SMR" id="Q3Z0Q1"/>
<dbReference type="GeneID" id="93775248"/>
<dbReference type="KEGG" id="ssn:SSON_1995"/>
<dbReference type="HOGENOM" id="CLU_147249_0_2_6"/>
<dbReference type="Proteomes" id="UP000002529">
    <property type="component" value="Chromosome"/>
</dbReference>
<dbReference type="GO" id="GO:0009425">
    <property type="term" value="C:bacterial-type flagellum basal body"/>
    <property type="evidence" value="ECO:0007669"/>
    <property type="project" value="UniProtKB-SubCell"/>
</dbReference>
<dbReference type="GO" id="GO:0003774">
    <property type="term" value="F:cytoskeletal motor activity"/>
    <property type="evidence" value="ECO:0007669"/>
    <property type="project" value="InterPro"/>
</dbReference>
<dbReference type="GO" id="GO:0005198">
    <property type="term" value="F:structural molecule activity"/>
    <property type="evidence" value="ECO:0007669"/>
    <property type="project" value="InterPro"/>
</dbReference>
<dbReference type="GO" id="GO:0071973">
    <property type="term" value="P:bacterial-type flagellum-dependent cell motility"/>
    <property type="evidence" value="ECO:0007669"/>
    <property type="project" value="InterPro"/>
</dbReference>
<dbReference type="HAMAP" id="MF_00724">
    <property type="entry name" value="FliE"/>
    <property type="match status" value="1"/>
</dbReference>
<dbReference type="InterPro" id="IPR001624">
    <property type="entry name" value="FliE"/>
</dbReference>
<dbReference type="NCBIfam" id="TIGR00205">
    <property type="entry name" value="fliE"/>
    <property type="match status" value="1"/>
</dbReference>
<dbReference type="PANTHER" id="PTHR34653">
    <property type="match status" value="1"/>
</dbReference>
<dbReference type="PANTHER" id="PTHR34653:SF1">
    <property type="entry name" value="FLAGELLAR HOOK-BASAL BODY COMPLEX PROTEIN FLIE"/>
    <property type="match status" value="1"/>
</dbReference>
<dbReference type="Pfam" id="PF02049">
    <property type="entry name" value="FliE"/>
    <property type="match status" value="1"/>
</dbReference>
<dbReference type="PRINTS" id="PR01006">
    <property type="entry name" value="FLGHOOKFLIE"/>
</dbReference>
<protein>
    <recommendedName>
        <fullName evidence="1">Flagellar hook-basal body complex protein FliE</fullName>
    </recommendedName>
</protein>
<feature type="chain" id="PRO_1000045878" description="Flagellar hook-basal body complex protein FliE">
    <location>
        <begin position="1"/>
        <end position="104"/>
    </location>
</feature>
<name>FLIE_SHISS</name>
<accession>Q3Z0Q1</accession>
<evidence type="ECO:0000255" key="1">
    <source>
        <dbReference type="HAMAP-Rule" id="MF_00724"/>
    </source>
</evidence>
<keyword id="KW-0975">Bacterial flagellum</keyword>
<keyword id="KW-1185">Reference proteome</keyword>
<sequence length="104" mass="11127">MSAIQGIEGVISQLQATAMSARAQESLPQPTISFAGQLHAALDRISDTQTAARTQAEKFTLGEPGVALNDVMTDMQKASVSMQMGIQVRNKLVAAYQEVMSMQV</sequence>
<comment type="subcellular location">
    <subcellularLocation>
        <location evidence="1">Bacterial flagellum basal body</location>
    </subcellularLocation>
</comment>
<comment type="similarity">
    <text evidence="1">Belongs to the FliE family.</text>
</comment>
<organism>
    <name type="scientific">Shigella sonnei (strain Ss046)</name>
    <dbReference type="NCBI Taxonomy" id="300269"/>
    <lineage>
        <taxon>Bacteria</taxon>
        <taxon>Pseudomonadati</taxon>
        <taxon>Pseudomonadota</taxon>
        <taxon>Gammaproteobacteria</taxon>
        <taxon>Enterobacterales</taxon>
        <taxon>Enterobacteriaceae</taxon>
        <taxon>Shigella</taxon>
    </lineage>
</organism>